<feature type="chain" id="PRO_0000128318" description="T-complex protein 1 subunit beta">
    <location>
        <begin position="1"/>
        <end position="529"/>
    </location>
</feature>
<feature type="sequence conflict" description="In Ref. 1; AAA93233." evidence="1" ref="1">
    <original>A</original>
    <variation>S</variation>
    <location>
        <position position="427"/>
    </location>
</feature>
<evidence type="ECO:0000305" key="1"/>
<keyword id="KW-0067">ATP-binding</keyword>
<keyword id="KW-0143">Chaperone</keyword>
<keyword id="KW-0963">Cytoplasm</keyword>
<keyword id="KW-0547">Nucleotide-binding</keyword>
<keyword id="KW-1185">Reference proteome</keyword>
<gene>
    <name type="primary">cct-2</name>
    <name type="synonym">cctb</name>
    <name type="ORF">T21B10.7</name>
</gene>
<protein>
    <recommendedName>
        <fullName>T-complex protein 1 subunit beta</fullName>
        <shortName>TCP-1-beta</shortName>
    </recommendedName>
    <alternativeName>
        <fullName>CCT-beta</fullName>
    </alternativeName>
</protein>
<comment type="function">
    <text>Molecular chaperone; assists the folding of proteins upon ATP hydrolysis. Known to play a role, in vitro, in the folding of actin and tubulin.</text>
</comment>
<comment type="subunit">
    <text>Heterooligomeric complex of about 850 to 900 kDa that forms two stacked rings, 12 to 16 nm in diameter.</text>
</comment>
<comment type="interaction">
    <interactant intactId="EBI-896048">
        <id>P47207</id>
    </interactant>
    <interactant intactId="EBI-2412943">
        <id>G5EEN7</id>
        <label>CELE_Y39A1A.3</label>
    </interactant>
    <organismsDiffer>false</organismsDiffer>
    <experiments>4</experiments>
</comment>
<comment type="subcellular location">
    <subcellularLocation>
        <location>Cytoplasm</location>
    </subcellularLocation>
</comment>
<comment type="similarity">
    <text evidence="1">Belongs to the TCP-1 chaperonin family.</text>
</comment>
<reference key="1">
    <citation type="journal article" date="1995" name="DNA Cell Biol.">
        <title>Characterization of four new tcp-1-related cct genes from the nematode Caenorhabditis elegans.</title>
        <authorList>
            <person name="Leroux M.R."/>
            <person name="Candido E.P.M."/>
        </authorList>
    </citation>
    <scope>NUCLEOTIDE SEQUENCE [MRNA]</scope>
    <source>
        <strain>Bristol N2</strain>
    </source>
</reference>
<reference key="2">
    <citation type="journal article" date="1998" name="Science">
        <title>Genome sequence of the nematode C. elegans: a platform for investigating biology.</title>
        <authorList>
            <consortium name="The C. elegans sequencing consortium"/>
        </authorList>
    </citation>
    <scope>NUCLEOTIDE SEQUENCE [LARGE SCALE GENOMIC DNA]</scope>
    <source>
        <strain>Bristol N2</strain>
    </source>
</reference>
<dbReference type="EMBL" id="U25632">
    <property type="protein sequence ID" value="AAA93233.1"/>
    <property type="molecule type" value="mRNA"/>
</dbReference>
<dbReference type="EMBL" id="Z68318">
    <property type="protein sequence ID" value="CAA92697.1"/>
    <property type="molecule type" value="Genomic_DNA"/>
</dbReference>
<dbReference type="EMBL" id="AL031268">
    <property type="protein sequence ID" value="CAA92697.1"/>
    <property type="status" value="JOINED"/>
    <property type="molecule type" value="Genomic_DNA"/>
</dbReference>
<dbReference type="PIR" id="T18589">
    <property type="entry name" value="T18589"/>
</dbReference>
<dbReference type="RefSeq" id="NP_741031.1">
    <property type="nucleotide sequence ID" value="NM_171985.8"/>
</dbReference>
<dbReference type="SMR" id="P47207"/>
<dbReference type="BioGRID" id="39748">
    <property type="interactions" value="18"/>
</dbReference>
<dbReference type="FunCoup" id="P47207">
    <property type="interactions" value="3137"/>
</dbReference>
<dbReference type="IntAct" id="P47207">
    <property type="interactions" value="3"/>
</dbReference>
<dbReference type="STRING" id="6239.T21B10.7.2"/>
<dbReference type="PaxDb" id="6239-T21B10.7"/>
<dbReference type="PeptideAtlas" id="P47207"/>
<dbReference type="EnsemblMetazoa" id="T21B10.7.1">
    <property type="protein sequence ID" value="T21B10.7.1"/>
    <property type="gene ID" value="WBGene00000378"/>
</dbReference>
<dbReference type="GeneID" id="174421"/>
<dbReference type="KEGG" id="cel:CELE_T21B10.7"/>
<dbReference type="UCSC" id="T21B10.7.1">
    <property type="organism name" value="c. elegans"/>
</dbReference>
<dbReference type="AGR" id="WB:WBGene00000378"/>
<dbReference type="CTD" id="174421"/>
<dbReference type="WormBase" id="T21B10.7">
    <property type="protein sequence ID" value="CE16437"/>
    <property type="gene ID" value="WBGene00000378"/>
    <property type="gene designation" value="cct-2"/>
</dbReference>
<dbReference type="eggNOG" id="KOG0363">
    <property type="taxonomic scope" value="Eukaryota"/>
</dbReference>
<dbReference type="GeneTree" id="ENSGT00550000074930"/>
<dbReference type="HOGENOM" id="CLU_008891_6_2_1"/>
<dbReference type="InParanoid" id="P47207"/>
<dbReference type="OMA" id="CAEMVMS"/>
<dbReference type="OrthoDB" id="10259763at2759"/>
<dbReference type="PhylomeDB" id="P47207"/>
<dbReference type="BRENDA" id="3.6.4.B10">
    <property type="organism ID" value="1045"/>
</dbReference>
<dbReference type="Reactome" id="R-CEL-390471">
    <property type="pathway name" value="Association of TriC/CCT with target proteins during biosynthesis"/>
</dbReference>
<dbReference type="Reactome" id="R-CEL-6798695">
    <property type="pathway name" value="Neutrophil degranulation"/>
</dbReference>
<dbReference type="Reactome" id="R-CEL-6814122">
    <property type="pathway name" value="Cooperation of PDCL (PhLP1) and TRiC/CCT in G-protein beta folding"/>
</dbReference>
<dbReference type="PRO" id="PR:P47207"/>
<dbReference type="Proteomes" id="UP000001940">
    <property type="component" value="Chromosome II"/>
</dbReference>
<dbReference type="Bgee" id="WBGene00000378">
    <property type="expression patterns" value="Expressed in germ line (C elegans) and 4 other cell types or tissues"/>
</dbReference>
<dbReference type="GO" id="GO:0005832">
    <property type="term" value="C:chaperonin-containing T-complex"/>
    <property type="evidence" value="ECO:0000318"/>
    <property type="project" value="GO_Central"/>
</dbReference>
<dbReference type="GO" id="GO:0005524">
    <property type="term" value="F:ATP binding"/>
    <property type="evidence" value="ECO:0007669"/>
    <property type="project" value="UniProtKB-KW"/>
</dbReference>
<dbReference type="GO" id="GO:0016887">
    <property type="term" value="F:ATP hydrolysis activity"/>
    <property type="evidence" value="ECO:0007669"/>
    <property type="project" value="InterPro"/>
</dbReference>
<dbReference type="GO" id="GO:0140662">
    <property type="term" value="F:ATP-dependent protein folding chaperone"/>
    <property type="evidence" value="ECO:0007669"/>
    <property type="project" value="InterPro"/>
</dbReference>
<dbReference type="GO" id="GO:0051082">
    <property type="term" value="F:unfolded protein binding"/>
    <property type="evidence" value="ECO:0000318"/>
    <property type="project" value="GO_Central"/>
</dbReference>
<dbReference type="GO" id="GO:0006457">
    <property type="term" value="P:protein folding"/>
    <property type="evidence" value="ECO:0000318"/>
    <property type="project" value="GO_Central"/>
</dbReference>
<dbReference type="CDD" id="cd03336">
    <property type="entry name" value="TCP1_beta"/>
    <property type="match status" value="1"/>
</dbReference>
<dbReference type="FunFam" id="3.30.260.10:FF:000025">
    <property type="entry name" value="Chaperonin containing TCP1 subunit 2"/>
    <property type="match status" value="1"/>
</dbReference>
<dbReference type="FunFam" id="3.50.7.10:FF:000002">
    <property type="entry name" value="T-complex protein 1 subunit beta"/>
    <property type="match status" value="1"/>
</dbReference>
<dbReference type="FunFam" id="1.10.560.10:FF:000017">
    <property type="entry name" value="T-complex protein 1 subunit eta"/>
    <property type="match status" value="1"/>
</dbReference>
<dbReference type="FunFam" id="1.10.560.10:FF:000045">
    <property type="entry name" value="T-complex protein 1 subunit eta"/>
    <property type="match status" value="1"/>
</dbReference>
<dbReference type="Gene3D" id="3.50.7.10">
    <property type="entry name" value="GroEL"/>
    <property type="match status" value="1"/>
</dbReference>
<dbReference type="Gene3D" id="1.10.560.10">
    <property type="entry name" value="GroEL-like equatorial domain"/>
    <property type="match status" value="1"/>
</dbReference>
<dbReference type="Gene3D" id="3.30.260.10">
    <property type="entry name" value="TCP-1-like chaperonin intermediate domain"/>
    <property type="match status" value="1"/>
</dbReference>
<dbReference type="InterPro" id="IPR012716">
    <property type="entry name" value="Chap_CCT_beta"/>
</dbReference>
<dbReference type="InterPro" id="IPR017998">
    <property type="entry name" value="Chaperone_TCP-1"/>
</dbReference>
<dbReference type="InterPro" id="IPR002194">
    <property type="entry name" value="Chaperonin_TCP-1_CS"/>
</dbReference>
<dbReference type="InterPro" id="IPR002423">
    <property type="entry name" value="Cpn60/GroEL/TCP-1"/>
</dbReference>
<dbReference type="InterPro" id="IPR027409">
    <property type="entry name" value="GroEL-like_apical_dom_sf"/>
</dbReference>
<dbReference type="InterPro" id="IPR027413">
    <property type="entry name" value="GROEL-like_equatorial_sf"/>
</dbReference>
<dbReference type="InterPro" id="IPR027410">
    <property type="entry name" value="TCP-1-like_intermed_sf"/>
</dbReference>
<dbReference type="InterPro" id="IPR053374">
    <property type="entry name" value="TCP-1_chaperonin"/>
</dbReference>
<dbReference type="NCBIfam" id="TIGR02341">
    <property type="entry name" value="chap_CCT_beta"/>
    <property type="match status" value="1"/>
</dbReference>
<dbReference type="NCBIfam" id="NF041083">
    <property type="entry name" value="thermosome_beta"/>
    <property type="match status" value="1"/>
</dbReference>
<dbReference type="PANTHER" id="PTHR11353">
    <property type="entry name" value="CHAPERONIN"/>
    <property type="match status" value="1"/>
</dbReference>
<dbReference type="Pfam" id="PF00118">
    <property type="entry name" value="Cpn60_TCP1"/>
    <property type="match status" value="1"/>
</dbReference>
<dbReference type="PRINTS" id="PR00304">
    <property type="entry name" value="TCOMPLEXTCP1"/>
</dbReference>
<dbReference type="SUPFAM" id="SSF52029">
    <property type="entry name" value="GroEL apical domain-like"/>
    <property type="match status" value="1"/>
</dbReference>
<dbReference type="SUPFAM" id="SSF48592">
    <property type="entry name" value="GroEL equatorial domain-like"/>
    <property type="match status" value="1"/>
</dbReference>
<dbReference type="SUPFAM" id="SSF54849">
    <property type="entry name" value="GroEL-intermediate domain like"/>
    <property type="match status" value="1"/>
</dbReference>
<dbReference type="PROSITE" id="PS00750">
    <property type="entry name" value="TCP1_1"/>
    <property type="match status" value="1"/>
</dbReference>
<dbReference type="PROSITE" id="PS00751">
    <property type="entry name" value="TCP1_2"/>
    <property type="match status" value="1"/>
</dbReference>
<dbReference type="PROSITE" id="PS00995">
    <property type="entry name" value="TCP1_3"/>
    <property type="match status" value="1"/>
</dbReference>
<name>TCPB_CAEEL</name>
<organism>
    <name type="scientific">Caenorhabditis elegans</name>
    <dbReference type="NCBI Taxonomy" id="6239"/>
    <lineage>
        <taxon>Eukaryota</taxon>
        <taxon>Metazoa</taxon>
        <taxon>Ecdysozoa</taxon>
        <taxon>Nematoda</taxon>
        <taxon>Chromadorea</taxon>
        <taxon>Rhabditida</taxon>
        <taxon>Rhabditina</taxon>
        <taxon>Rhabditomorpha</taxon>
        <taxon>Rhabditoidea</taxon>
        <taxon>Rhabditidae</taxon>
        <taxon>Peloderinae</taxon>
        <taxon>Caenorhabditis</taxon>
    </lineage>
</organism>
<sequence>MLPVQILKDNAQEERGESARLSSFVGAIAIGDLVKSTLGPKGMDKILISGNPESAGGIKVTNDGATILKSIGVDNPAAKVLVDMSMTQDHEVGDGTTSVTVLAAELLKEAEKLVNQRIHPQTIISGYRRALGIAQESLKKSSIESGDNIRDDLLKIARTTLGSKILSQHKEHFAQLAVDAVLRLKGSGNLDAIQIIKKLGGSMNESYLDEGFLLEKLPGMFQPRRVEKAKILIANTPMDTDKVKVFGSRVRVDGVAKVAELEAAEKLKMKEKVDKILAHNCNVFINRQLIYNYPEQLFADAKVMAIEHADFEGIERLALVLGGEIVSTFDSPQTAQFGSCDLIEEIMIGEDRLLRFSGVKLGEACSVVLRGATQQILDESERSLHDALCVLVTHVKESKTVAGAGASEILMSSAIAVEAQKVAGKEALAVEAFGRALAQLPTIICDNAGLDSAELVTRLRAEHANGRHNMGIDIEKGEVADVTKLGVIESYNVKLCMVSSAAEATEQILRVDDIIKAAPRARAQDNRPC</sequence>
<proteinExistence type="evidence at protein level"/>
<accession>P47207</accession>
<accession>Q22628</accession>